<protein>
    <recommendedName>
        <fullName evidence="1">GTPase Obg</fullName>
        <ecNumber evidence="1">3.6.5.-</ecNumber>
    </recommendedName>
    <alternativeName>
        <fullName evidence="1">GTP-binding protein Obg</fullName>
    </alternativeName>
</protein>
<keyword id="KW-0963">Cytoplasm</keyword>
<keyword id="KW-0342">GTP-binding</keyword>
<keyword id="KW-0378">Hydrolase</keyword>
<keyword id="KW-0460">Magnesium</keyword>
<keyword id="KW-0479">Metal-binding</keyword>
<keyword id="KW-0547">Nucleotide-binding</keyword>
<reference key="1">
    <citation type="journal article" date="2010" name="Genome Biol. Evol.">
        <title>Continuing evolution of Burkholderia mallei through genome reduction and large-scale rearrangements.</title>
        <authorList>
            <person name="Losada L."/>
            <person name="Ronning C.M."/>
            <person name="DeShazer D."/>
            <person name="Woods D."/>
            <person name="Fedorova N."/>
            <person name="Kim H.S."/>
            <person name="Shabalina S.A."/>
            <person name="Pearson T.R."/>
            <person name="Brinkac L."/>
            <person name="Tan P."/>
            <person name="Nandi T."/>
            <person name="Crabtree J."/>
            <person name="Badger J."/>
            <person name="Beckstrom-Sternberg S."/>
            <person name="Saqib M."/>
            <person name="Schutzer S.E."/>
            <person name="Keim P."/>
            <person name="Nierman W.C."/>
        </authorList>
    </citation>
    <scope>NUCLEOTIDE SEQUENCE [LARGE SCALE GENOMIC DNA]</scope>
    <source>
        <strain>668</strain>
    </source>
</reference>
<proteinExistence type="inferred from homology"/>
<dbReference type="EC" id="3.6.5.-" evidence="1"/>
<dbReference type="EMBL" id="CP000570">
    <property type="protein sequence ID" value="ABN81461.1"/>
    <property type="molecule type" value="Genomic_DNA"/>
</dbReference>
<dbReference type="RefSeq" id="WP_011852217.1">
    <property type="nucleotide sequence ID" value="NC_009074.1"/>
</dbReference>
<dbReference type="SMR" id="A3NDS7"/>
<dbReference type="KEGG" id="bpd:BURPS668_3487"/>
<dbReference type="HOGENOM" id="CLU_011747_2_0_4"/>
<dbReference type="GO" id="GO:0005737">
    <property type="term" value="C:cytoplasm"/>
    <property type="evidence" value="ECO:0007669"/>
    <property type="project" value="UniProtKB-SubCell"/>
</dbReference>
<dbReference type="GO" id="GO:0005525">
    <property type="term" value="F:GTP binding"/>
    <property type="evidence" value="ECO:0007669"/>
    <property type="project" value="UniProtKB-UniRule"/>
</dbReference>
<dbReference type="GO" id="GO:0003924">
    <property type="term" value="F:GTPase activity"/>
    <property type="evidence" value="ECO:0007669"/>
    <property type="project" value="UniProtKB-UniRule"/>
</dbReference>
<dbReference type="GO" id="GO:0000287">
    <property type="term" value="F:magnesium ion binding"/>
    <property type="evidence" value="ECO:0007669"/>
    <property type="project" value="InterPro"/>
</dbReference>
<dbReference type="GO" id="GO:0042254">
    <property type="term" value="P:ribosome biogenesis"/>
    <property type="evidence" value="ECO:0007669"/>
    <property type="project" value="UniProtKB-UniRule"/>
</dbReference>
<dbReference type="CDD" id="cd01898">
    <property type="entry name" value="Obg"/>
    <property type="match status" value="1"/>
</dbReference>
<dbReference type="FunFam" id="2.70.210.12:FF:000001">
    <property type="entry name" value="GTPase Obg"/>
    <property type="match status" value="1"/>
</dbReference>
<dbReference type="Gene3D" id="2.70.210.12">
    <property type="entry name" value="GTP1/OBG domain"/>
    <property type="match status" value="1"/>
</dbReference>
<dbReference type="Gene3D" id="3.40.50.300">
    <property type="entry name" value="P-loop containing nucleotide triphosphate hydrolases"/>
    <property type="match status" value="1"/>
</dbReference>
<dbReference type="HAMAP" id="MF_01454">
    <property type="entry name" value="GTPase_Obg"/>
    <property type="match status" value="1"/>
</dbReference>
<dbReference type="InterPro" id="IPR031167">
    <property type="entry name" value="G_OBG"/>
</dbReference>
<dbReference type="InterPro" id="IPR006073">
    <property type="entry name" value="GTP-bd"/>
</dbReference>
<dbReference type="InterPro" id="IPR014100">
    <property type="entry name" value="GTP-bd_Obg/CgtA"/>
</dbReference>
<dbReference type="InterPro" id="IPR006074">
    <property type="entry name" value="GTP1-OBG_CS"/>
</dbReference>
<dbReference type="InterPro" id="IPR006169">
    <property type="entry name" value="GTP1_OBG_dom"/>
</dbReference>
<dbReference type="InterPro" id="IPR036726">
    <property type="entry name" value="GTP1_OBG_dom_sf"/>
</dbReference>
<dbReference type="InterPro" id="IPR045086">
    <property type="entry name" value="OBG_GTPase"/>
</dbReference>
<dbReference type="InterPro" id="IPR027417">
    <property type="entry name" value="P-loop_NTPase"/>
</dbReference>
<dbReference type="NCBIfam" id="TIGR02729">
    <property type="entry name" value="Obg_CgtA"/>
    <property type="match status" value="1"/>
</dbReference>
<dbReference type="NCBIfam" id="NF008954">
    <property type="entry name" value="PRK12296.1"/>
    <property type="match status" value="1"/>
</dbReference>
<dbReference type="NCBIfam" id="NF008955">
    <property type="entry name" value="PRK12297.1"/>
    <property type="match status" value="1"/>
</dbReference>
<dbReference type="NCBIfam" id="NF008956">
    <property type="entry name" value="PRK12299.1"/>
    <property type="match status" value="1"/>
</dbReference>
<dbReference type="PANTHER" id="PTHR11702">
    <property type="entry name" value="DEVELOPMENTALLY REGULATED GTP-BINDING PROTEIN-RELATED"/>
    <property type="match status" value="1"/>
</dbReference>
<dbReference type="PANTHER" id="PTHR11702:SF31">
    <property type="entry name" value="MITOCHONDRIAL RIBOSOME-ASSOCIATED GTPASE 2"/>
    <property type="match status" value="1"/>
</dbReference>
<dbReference type="Pfam" id="PF01018">
    <property type="entry name" value="GTP1_OBG"/>
    <property type="match status" value="1"/>
</dbReference>
<dbReference type="Pfam" id="PF01926">
    <property type="entry name" value="MMR_HSR1"/>
    <property type="match status" value="1"/>
</dbReference>
<dbReference type="PIRSF" id="PIRSF002401">
    <property type="entry name" value="GTP_bd_Obg/CgtA"/>
    <property type="match status" value="1"/>
</dbReference>
<dbReference type="PRINTS" id="PR00326">
    <property type="entry name" value="GTP1OBG"/>
</dbReference>
<dbReference type="SUPFAM" id="SSF82051">
    <property type="entry name" value="Obg GTP-binding protein N-terminal domain"/>
    <property type="match status" value="1"/>
</dbReference>
<dbReference type="SUPFAM" id="SSF52540">
    <property type="entry name" value="P-loop containing nucleoside triphosphate hydrolases"/>
    <property type="match status" value="1"/>
</dbReference>
<dbReference type="PROSITE" id="PS51710">
    <property type="entry name" value="G_OBG"/>
    <property type="match status" value="1"/>
</dbReference>
<dbReference type="PROSITE" id="PS00905">
    <property type="entry name" value="GTP1_OBG"/>
    <property type="match status" value="1"/>
</dbReference>
<dbReference type="PROSITE" id="PS51883">
    <property type="entry name" value="OBG"/>
    <property type="match status" value="1"/>
</dbReference>
<feature type="chain" id="PRO_0000385792" description="GTPase Obg">
    <location>
        <begin position="1"/>
        <end position="372"/>
    </location>
</feature>
<feature type="domain" description="Obg" evidence="2">
    <location>
        <begin position="1"/>
        <end position="159"/>
    </location>
</feature>
<feature type="domain" description="OBG-type G" evidence="1">
    <location>
        <begin position="160"/>
        <end position="334"/>
    </location>
</feature>
<feature type="region of interest" description="Disordered" evidence="3">
    <location>
        <begin position="128"/>
        <end position="147"/>
    </location>
</feature>
<feature type="binding site" evidence="1">
    <location>
        <begin position="166"/>
        <end position="173"/>
    </location>
    <ligand>
        <name>GTP</name>
        <dbReference type="ChEBI" id="CHEBI:37565"/>
    </ligand>
</feature>
<feature type="binding site" evidence="1">
    <location>
        <position position="173"/>
    </location>
    <ligand>
        <name>Mg(2+)</name>
        <dbReference type="ChEBI" id="CHEBI:18420"/>
    </ligand>
</feature>
<feature type="binding site" evidence="1">
    <location>
        <begin position="191"/>
        <end position="195"/>
    </location>
    <ligand>
        <name>GTP</name>
        <dbReference type="ChEBI" id="CHEBI:37565"/>
    </ligand>
</feature>
<feature type="binding site" evidence="1">
    <location>
        <position position="193"/>
    </location>
    <ligand>
        <name>Mg(2+)</name>
        <dbReference type="ChEBI" id="CHEBI:18420"/>
    </ligand>
</feature>
<feature type="binding site" evidence="1">
    <location>
        <begin position="213"/>
        <end position="216"/>
    </location>
    <ligand>
        <name>GTP</name>
        <dbReference type="ChEBI" id="CHEBI:37565"/>
    </ligand>
</feature>
<feature type="binding site" evidence="1">
    <location>
        <begin position="284"/>
        <end position="287"/>
    </location>
    <ligand>
        <name>GTP</name>
        <dbReference type="ChEBI" id="CHEBI:37565"/>
    </ligand>
</feature>
<feature type="binding site" evidence="1">
    <location>
        <begin position="315"/>
        <end position="317"/>
    </location>
    <ligand>
        <name>GTP</name>
        <dbReference type="ChEBI" id="CHEBI:37565"/>
    </ligand>
</feature>
<name>OBG_BURP6</name>
<organism>
    <name type="scientific">Burkholderia pseudomallei (strain 668)</name>
    <dbReference type="NCBI Taxonomy" id="320373"/>
    <lineage>
        <taxon>Bacteria</taxon>
        <taxon>Pseudomonadati</taxon>
        <taxon>Pseudomonadota</taxon>
        <taxon>Betaproteobacteria</taxon>
        <taxon>Burkholderiales</taxon>
        <taxon>Burkholderiaceae</taxon>
        <taxon>Burkholderia</taxon>
        <taxon>pseudomallei group</taxon>
    </lineage>
</organism>
<sequence length="372" mass="40180">MKFIDEARIEVIAGDGGDGSASMRREKFVPFGGPDGGDGGRGGSVYVIADRNINTLIDYRYAKKHMARNGENGRGSDCYGKGGDDITLRMPVGTVINDMDTGELIADLTEHDQKVLVAKGGAGGLGNLHFKSSTNRAPRQKTDGKPGERRMLKLELKVLADVGLLGMPNAGKSTFISSVSNAKPKIADYPFTTLAPNLGVVRVGPGKSFVIADIPGLIEGAAEGAGLGHQFLRHLQRTGLLLHLVDLAPFDERVDPVAEARAIVGELRKYDESLYEKPRWLVLNKLDMVPEDERRARVADFIERFGWTGPVFEISALTGQGCESLVYAIHDYLVEHSDAHRAELAEDLASDVRFRDAPGAGGEPHERDAGAH</sequence>
<accession>A3NDS7</accession>
<evidence type="ECO:0000255" key="1">
    <source>
        <dbReference type="HAMAP-Rule" id="MF_01454"/>
    </source>
</evidence>
<evidence type="ECO:0000255" key="2">
    <source>
        <dbReference type="PROSITE-ProRule" id="PRU01231"/>
    </source>
</evidence>
<evidence type="ECO:0000256" key="3">
    <source>
        <dbReference type="SAM" id="MobiDB-lite"/>
    </source>
</evidence>
<gene>
    <name evidence="1" type="primary">obg</name>
    <name type="ordered locus">BURPS668_3487</name>
</gene>
<comment type="function">
    <text evidence="1">An essential GTPase which binds GTP, GDP and possibly (p)ppGpp with moderate affinity, with high nucleotide exchange rates and a fairly low GTP hydrolysis rate. Plays a role in control of the cell cycle, stress response, ribosome biogenesis and in those bacteria that undergo differentiation, in morphogenesis control.</text>
</comment>
<comment type="cofactor">
    <cofactor evidence="1">
        <name>Mg(2+)</name>
        <dbReference type="ChEBI" id="CHEBI:18420"/>
    </cofactor>
</comment>
<comment type="subunit">
    <text evidence="1">Monomer.</text>
</comment>
<comment type="subcellular location">
    <subcellularLocation>
        <location evidence="1">Cytoplasm</location>
    </subcellularLocation>
</comment>
<comment type="similarity">
    <text evidence="1">Belongs to the TRAFAC class OBG-HflX-like GTPase superfamily. OBG GTPase family.</text>
</comment>